<feature type="signal peptide" evidence="2">
    <location>
        <begin position="1"/>
        <end position="24"/>
    </location>
</feature>
<feature type="propeptide" id="PRO_0000028628" evidence="2">
    <location>
        <begin position="25"/>
        <end position="196"/>
    </location>
</feature>
<feature type="chain" id="PRO_0000028629" description="Hemagglutinin/proteinase">
    <location>
        <begin position="197"/>
        <end position="609"/>
    </location>
</feature>
<feature type="active site" evidence="3">
    <location>
        <position position="344"/>
    </location>
</feature>
<feature type="active site" description="Proton donor" evidence="3">
    <location>
        <position position="426"/>
    </location>
</feature>
<feature type="binding site" evidence="3">
    <location>
        <position position="343"/>
    </location>
    <ligand>
        <name>Zn(2+)</name>
        <dbReference type="ChEBI" id="CHEBI:29105"/>
        <note>catalytic</note>
    </ligand>
</feature>
<feature type="binding site" evidence="3">
    <location>
        <position position="347"/>
    </location>
    <ligand>
        <name>Zn(2+)</name>
        <dbReference type="ChEBI" id="CHEBI:29105"/>
        <note>catalytic</note>
    </ligand>
</feature>
<feature type="binding site" evidence="3">
    <location>
        <position position="367"/>
    </location>
    <ligand>
        <name>Zn(2+)</name>
        <dbReference type="ChEBI" id="CHEBI:29105"/>
        <note>catalytic</note>
    </ligand>
</feature>
<reference key="1">
    <citation type="journal article" date="1991" name="J. Bacteriol.">
        <title>Cloning and nucleotide sequence of the Vibrio cholerae hemagglutinin/protease (HA/protease) gene and construction of an HA/protease-negative strain.</title>
        <authorList>
            <person name="Haese C.C."/>
            <person name="Finkelstein R.A."/>
        </authorList>
    </citation>
    <scope>NUCLEOTIDE SEQUENCE [GENOMIC DNA]</scope>
    <source>
        <strain>3083</strain>
    </source>
</reference>
<reference key="2">
    <citation type="journal article" date="2000" name="Nature">
        <title>DNA sequence of both chromosomes of the cholera pathogen Vibrio cholerae.</title>
        <authorList>
            <person name="Heidelberg J.F."/>
            <person name="Eisen J.A."/>
            <person name="Nelson W.C."/>
            <person name="Clayton R.A."/>
            <person name="Gwinn M.L."/>
            <person name="Dodson R.J."/>
            <person name="Haft D.H."/>
            <person name="Hickey E.K."/>
            <person name="Peterson J.D."/>
            <person name="Umayam L.A."/>
            <person name="Gill S.R."/>
            <person name="Nelson K.E."/>
            <person name="Read T.D."/>
            <person name="Tettelin H."/>
            <person name="Richardson D.L."/>
            <person name="Ermolaeva M.D."/>
            <person name="Vamathevan J.J."/>
            <person name="Bass S."/>
            <person name="Qin H."/>
            <person name="Dragoi I."/>
            <person name="Sellers P."/>
            <person name="McDonald L.A."/>
            <person name="Utterback T.R."/>
            <person name="Fleischmann R.D."/>
            <person name="Nierman W.C."/>
            <person name="White O."/>
            <person name="Salzberg S.L."/>
            <person name="Smith H.O."/>
            <person name="Colwell R.R."/>
            <person name="Mekalanos J.J."/>
            <person name="Venter J.C."/>
            <person name="Fraser C.M."/>
        </authorList>
    </citation>
    <scope>NUCLEOTIDE SEQUENCE [LARGE SCALE GENOMIC DNA]</scope>
    <source>
        <strain>ATCC 39315 / El Tor Inaba N16961</strain>
    </source>
</reference>
<reference key="3">
    <citation type="journal article" date="1990" name="Infect. Immun.">
        <title>Comparison of the Vibrio cholerae hemagglutinin/protease and the Pseudomonas aeruginosa elastase.</title>
        <authorList>
            <person name="Haese C.C."/>
            <person name="Finkelstein R.A."/>
        </authorList>
    </citation>
    <scope>PROTEIN SEQUENCE OF 197-217</scope>
    <source>
        <strain>Classical CA401</strain>
    </source>
</reference>
<comment type="function">
    <text>May play a role in the pathogenesis of cholera. Hap nicks and activates the A subunit of cholera enterotoxin and related enterotoxins.</text>
</comment>
<comment type="cofactor">
    <cofactor evidence="1">
        <name>Zn(2+)</name>
        <dbReference type="ChEBI" id="CHEBI:29105"/>
    </cofactor>
    <text evidence="1">Binds 1 zinc ion.</text>
</comment>
<comment type="subcellular location">
    <subcellularLocation>
        <location>Secreted</location>
    </subcellularLocation>
</comment>
<comment type="similarity">
    <text evidence="4">Belongs to the peptidase M4 family.</text>
</comment>
<comment type="caution">
    <text evidence="4">It is uncertain whether Met-1 or Met-3 is the initiator.</text>
</comment>
<keyword id="KW-0106">Calcium</keyword>
<keyword id="KW-0903">Direct protein sequencing</keyword>
<keyword id="KW-0378">Hydrolase</keyword>
<keyword id="KW-0479">Metal-binding</keyword>
<keyword id="KW-0482">Metalloprotease</keyword>
<keyword id="KW-0645">Protease</keyword>
<keyword id="KW-1185">Reference proteome</keyword>
<keyword id="KW-0964">Secreted</keyword>
<keyword id="KW-0732">Signal</keyword>
<keyword id="KW-0862">Zinc</keyword>
<keyword id="KW-0865">Zymogen</keyword>
<evidence type="ECO:0000250" key="1"/>
<evidence type="ECO:0000255" key="2"/>
<evidence type="ECO:0000255" key="3">
    <source>
        <dbReference type="PROSITE-ProRule" id="PRU10095"/>
    </source>
</evidence>
<evidence type="ECO:0000305" key="4"/>
<gene>
    <name type="primary">hap</name>
    <name type="ordered locus">VC_A0865</name>
</gene>
<dbReference type="EC" id="3.4.24.-"/>
<dbReference type="EMBL" id="M59466">
    <property type="protein sequence ID" value="AAA27579.1"/>
    <property type="molecule type" value="Genomic_DNA"/>
</dbReference>
<dbReference type="EMBL" id="AE003853">
    <property type="protein sequence ID" value="AAF96763.1"/>
    <property type="molecule type" value="Genomic_DNA"/>
</dbReference>
<dbReference type="PIR" id="A42358">
    <property type="entry name" value="A42358"/>
</dbReference>
<dbReference type="RefSeq" id="NP_233251.1">
    <property type="nucleotide sequence ID" value="NC_002506.1"/>
</dbReference>
<dbReference type="SMR" id="P24153"/>
<dbReference type="STRING" id="243277.VC_A0865"/>
<dbReference type="MEROPS" id="M04.003"/>
<dbReference type="DNASU" id="2612874"/>
<dbReference type="EnsemblBacteria" id="AAF96763">
    <property type="protein sequence ID" value="AAF96763"/>
    <property type="gene ID" value="VC_A0865"/>
</dbReference>
<dbReference type="KEGG" id="vch:VC_A0865"/>
<dbReference type="PATRIC" id="fig|243277.26.peg.3481"/>
<dbReference type="eggNOG" id="COG3227">
    <property type="taxonomic scope" value="Bacteria"/>
</dbReference>
<dbReference type="HOGENOM" id="CLU_008590_4_2_6"/>
<dbReference type="BRENDA" id="3.4.24.25">
    <property type="organism ID" value="6626"/>
</dbReference>
<dbReference type="Proteomes" id="UP000000584">
    <property type="component" value="Chromosome 2"/>
</dbReference>
<dbReference type="GO" id="GO:0005576">
    <property type="term" value="C:extracellular region"/>
    <property type="evidence" value="ECO:0007669"/>
    <property type="project" value="UniProtKB-SubCell"/>
</dbReference>
<dbReference type="GO" id="GO:0046872">
    <property type="term" value="F:metal ion binding"/>
    <property type="evidence" value="ECO:0007669"/>
    <property type="project" value="UniProtKB-KW"/>
</dbReference>
<dbReference type="GO" id="GO:0004222">
    <property type="term" value="F:metalloendopeptidase activity"/>
    <property type="evidence" value="ECO:0007669"/>
    <property type="project" value="InterPro"/>
</dbReference>
<dbReference type="GO" id="GO:0006508">
    <property type="term" value="P:proteolysis"/>
    <property type="evidence" value="ECO:0000318"/>
    <property type="project" value="GO_Central"/>
</dbReference>
<dbReference type="CDD" id="cd09597">
    <property type="entry name" value="M4_TLP"/>
    <property type="match status" value="1"/>
</dbReference>
<dbReference type="FunFam" id="2.60.120.380:FF:000013">
    <property type="entry name" value="Alkaline serine protease"/>
    <property type="match status" value="1"/>
</dbReference>
<dbReference type="FunFam" id="3.10.170.10:FF:000002">
    <property type="entry name" value="Elastase"/>
    <property type="match status" value="1"/>
</dbReference>
<dbReference type="FunFam" id="3.10.450.490:FF:000004">
    <property type="entry name" value="Hemagglutinin/proteinase"/>
    <property type="match status" value="1"/>
</dbReference>
<dbReference type="Gene3D" id="2.60.120.380">
    <property type="match status" value="1"/>
</dbReference>
<dbReference type="Gene3D" id="3.10.170.10">
    <property type="match status" value="1"/>
</dbReference>
<dbReference type="Gene3D" id="3.10.450.40">
    <property type="match status" value="1"/>
</dbReference>
<dbReference type="Gene3D" id="3.10.450.490">
    <property type="match status" value="1"/>
</dbReference>
<dbReference type="Gene3D" id="1.10.390.10">
    <property type="entry name" value="Neutral Protease Domain 2"/>
    <property type="match status" value="1"/>
</dbReference>
<dbReference type="InterPro" id="IPR011096">
    <property type="entry name" value="FTP_domain"/>
</dbReference>
<dbReference type="InterPro" id="IPR025711">
    <property type="entry name" value="PepSY"/>
</dbReference>
<dbReference type="InterPro" id="IPR007280">
    <property type="entry name" value="Peptidase_C_arc/bac"/>
</dbReference>
<dbReference type="InterPro" id="IPR023612">
    <property type="entry name" value="Peptidase_M4"/>
</dbReference>
<dbReference type="InterPro" id="IPR027268">
    <property type="entry name" value="Peptidase_M4/M1_CTD_sf"/>
</dbReference>
<dbReference type="InterPro" id="IPR001570">
    <property type="entry name" value="Peptidase_M4_C_domain"/>
</dbReference>
<dbReference type="InterPro" id="IPR013856">
    <property type="entry name" value="Peptidase_M4_domain"/>
</dbReference>
<dbReference type="InterPro" id="IPR050728">
    <property type="entry name" value="Zinc_Metalloprotease_M4"/>
</dbReference>
<dbReference type="PANTHER" id="PTHR33794">
    <property type="entry name" value="BACILLOLYSIN"/>
    <property type="match status" value="1"/>
</dbReference>
<dbReference type="PANTHER" id="PTHR33794:SF1">
    <property type="entry name" value="BACILLOLYSIN"/>
    <property type="match status" value="1"/>
</dbReference>
<dbReference type="Pfam" id="PF07504">
    <property type="entry name" value="FTP"/>
    <property type="match status" value="1"/>
</dbReference>
<dbReference type="Pfam" id="PF03413">
    <property type="entry name" value="PepSY"/>
    <property type="match status" value="1"/>
</dbReference>
<dbReference type="Pfam" id="PF01447">
    <property type="entry name" value="Peptidase_M4"/>
    <property type="match status" value="1"/>
</dbReference>
<dbReference type="Pfam" id="PF02868">
    <property type="entry name" value="Peptidase_M4_C"/>
    <property type="match status" value="1"/>
</dbReference>
<dbReference type="Pfam" id="PF04151">
    <property type="entry name" value="PPC"/>
    <property type="match status" value="1"/>
</dbReference>
<dbReference type="PRINTS" id="PR00730">
    <property type="entry name" value="THERMOLYSIN"/>
</dbReference>
<dbReference type="SUPFAM" id="SSF89260">
    <property type="entry name" value="Collagen-binding domain"/>
    <property type="match status" value="1"/>
</dbReference>
<dbReference type="SUPFAM" id="SSF55486">
    <property type="entry name" value="Metalloproteases ('zincins'), catalytic domain"/>
    <property type="match status" value="1"/>
</dbReference>
<dbReference type="PROSITE" id="PS00142">
    <property type="entry name" value="ZINC_PROTEASE"/>
    <property type="match status" value="1"/>
</dbReference>
<proteinExistence type="evidence at protein level"/>
<organism>
    <name type="scientific">Vibrio cholerae serotype O1 (strain ATCC 39315 / El Tor Inaba N16961)</name>
    <dbReference type="NCBI Taxonomy" id="243277"/>
    <lineage>
        <taxon>Bacteria</taxon>
        <taxon>Pseudomonadati</taxon>
        <taxon>Pseudomonadota</taxon>
        <taxon>Gammaproteobacteria</taxon>
        <taxon>Vibrionales</taxon>
        <taxon>Vibrionaceae</taxon>
        <taxon>Vibrio</taxon>
    </lineage>
</organism>
<accession>P24153</accession>
<accession>Q9JPZ3</accession>
<name>HAPT_VIBCH</name>
<sequence length="609" mass="65891">MKMIQRPLNWLVLAGAATGFPLYAAQMVTIDDASMVEQALAQQQYSMMPAASGFKAVNTVQLPNGKVKVRYQQMYNGVPVYGTVVVATESSKGISQVYGQMAQQLEADLPTVTPDIESQQAIALAVSHFGEQHAGESLPVENESVQLMVRLDDNQQAQLVYLVDFFVASETPSRPFYFISAETGEVLDQWDGINHAQATGTGPGGNQKTGRYEYGSNGLPGFTIDKTGTTCTMNNSAVKTVNLNGGTSGSTAFSYACNNSTNYNSVKTVNGAYSPLNDAHFFGKVVFDMYQQWLNTSPLTFQLTMRVHYGNNYENAFWDGRAMTFGDGYTRFYPLVDINVSAHEVSHGFTEQNSGLVYRDMSGGINEAFSDIAGEAAEYFMRGNVDWIVGADIFKSSGGLRYFDQPSRDGRSIDHASQYYSGIDVHHSSGVFNRAFYLLANKSGWNVRKGFEVFAVANQLYWTPNSTFDQGGCGVVKAAQDLNYNTADVVAAFNTVGVNASCGTTPPPVGKVLEKGKPITGLSGSRGGEDFYTFTVTNSGSVVVSISGGTGDADLYVKAGSKPTTSSWDCRPYRSGNAEQCSISAVVGTTYHVMLRGYSNYSGVTLRLD</sequence>
<protein>
    <recommendedName>
        <fullName>Hemagglutinin/proteinase</fullName>
        <shortName>HA/protease</shortName>
        <ecNumber>3.4.24.-</ecNumber>
    </recommendedName>
    <alternativeName>
        <fullName>Vibriolysin</fullName>
    </alternativeName>
</protein>